<dbReference type="EC" id="2.7.10.1"/>
<dbReference type="EMBL" id="X70040">
    <property type="protein sequence ID" value="CAA49634.1"/>
    <property type="molecule type" value="mRNA"/>
</dbReference>
<dbReference type="EMBL" id="EU826582">
    <property type="protein sequence ID" value="ACF47618.1"/>
    <property type="molecule type" value="mRNA"/>
</dbReference>
<dbReference type="EMBL" id="EU826583">
    <property type="protein sequence ID" value="ACF47619.1"/>
    <property type="molecule type" value="mRNA"/>
</dbReference>
<dbReference type="EMBL" id="EU826584">
    <property type="protein sequence ID" value="ACF47620.1"/>
    <property type="molecule type" value="mRNA"/>
</dbReference>
<dbReference type="EMBL" id="EU826585">
    <property type="protein sequence ID" value="ACF47621.1"/>
    <property type="molecule type" value="mRNA"/>
</dbReference>
<dbReference type="EMBL" id="AC105935">
    <property type="status" value="NOT_ANNOTATED_CDS"/>
    <property type="molecule type" value="Genomic_DNA"/>
</dbReference>
<dbReference type="EMBL" id="KC876868">
    <property type="status" value="NOT_ANNOTATED_CDS"/>
    <property type="molecule type" value="Genomic_DNA"/>
</dbReference>
<dbReference type="CCDS" id="CCDS2807.1">
    <molecule id="Q04912-1"/>
</dbReference>
<dbReference type="CCDS" id="CCDS58833.1">
    <molecule id="Q04912-2"/>
</dbReference>
<dbReference type="CCDS" id="CCDS82777.1">
    <molecule id="Q04912-7"/>
</dbReference>
<dbReference type="PIR" id="I38185">
    <property type="entry name" value="I38185"/>
</dbReference>
<dbReference type="RefSeq" id="NP_001231866.1">
    <molecule id="Q04912-2"/>
    <property type="nucleotide sequence ID" value="NM_001244937.3"/>
</dbReference>
<dbReference type="RefSeq" id="NP_001305842.1">
    <molecule id="Q04912-7"/>
    <property type="nucleotide sequence ID" value="NM_001318913.2"/>
</dbReference>
<dbReference type="RefSeq" id="NP_002438.2">
    <molecule id="Q04912-1"/>
    <property type="nucleotide sequence ID" value="NM_002447.4"/>
</dbReference>
<dbReference type="PDB" id="3PLS">
    <property type="method" value="X-ray"/>
    <property type="resolution" value="2.24 A"/>
    <property type="chains" value="A=1060-1357"/>
</dbReference>
<dbReference type="PDB" id="4FWW">
    <property type="method" value="X-ray"/>
    <property type="resolution" value="1.85 A"/>
    <property type="chains" value="A=42-568"/>
</dbReference>
<dbReference type="PDB" id="4QT8">
    <property type="method" value="X-ray"/>
    <property type="resolution" value="3.00 A"/>
    <property type="chains" value="A/B=25-683"/>
</dbReference>
<dbReference type="PDB" id="8ZKD">
    <property type="method" value="X-ray"/>
    <property type="resolution" value="2.05 A"/>
    <property type="chains" value="A=1060-1357"/>
</dbReference>
<dbReference type="PDBsum" id="3PLS"/>
<dbReference type="PDBsum" id="4FWW"/>
<dbReference type="PDBsum" id="4QT8"/>
<dbReference type="PDBsum" id="8ZKD"/>
<dbReference type="SMR" id="Q04912"/>
<dbReference type="BioGRID" id="110592">
    <property type="interactions" value="233"/>
</dbReference>
<dbReference type="CORUM" id="Q04912"/>
<dbReference type="DIP" id="DIP-6029N"/>
<dbReference type="FunCoup" id="Q04912">
    <property type="interactions" value="389"/>
</dbReference>
<dbReference type="IntAct" id="Q04912">
    <property type="interactions" value="158"/>
</dbReference>
<dbReference type="MINT" id="Q04912"/>
<dbReference type="STRING" id="9606.ENSP00000296474"/>
<dbReference type="BindingDB" id="Q04912"/>
<dbReference type="ChEMBL" id="CHEMBL2689"/>
<dbReference type="DrugBank" id="DB08865">
    <property type="generic name" value="Crizotinib"/>
</dbReference>
<dbReference type="DrugBank" id="DB12010">
    <property type="generic name" value="Fostamatinib"/>
</dbReference>
<dbReference type="DrugCentral" id="Q04912"/>
<dbReference type="GuidetoPHARMACOLOGY" id="1816"/>
<dbReference type="GlyCosmos" id="Q04912">
    <property type="glycosylation" value="8 sites, No reported glycans"/>
</dbReference>
<dbReference type="GlyGen" id="Q04912">
    <property type="glycosylation" value="9 sites, 5 N-linked glycans (5 sites)"/>
</dbReference>
<dbReference type="iPTMnet" id="Q04912"/>
<dbReference type="PhosphoSitePlus" id="Q04912"/>
<dbReference type="SwissPalm" id="Q04912"/>
<dbReference type="BioMuta" id="MST1R"/>
<dbReference type="DMDM" id="294862462"/>
<dbReference type="CPTAC" id="CPTAC-2850"/>
<dbReference type="CPTAC" id="CPTAC-2851"/>
<dbReference type="jPOST" id="Q04912"/>
<dbReference type="MassIVE" id="Q04912"/>
<dbReference type="PaxDb" id="9606-ENSP00000296474"/>
<dbReference type="PeptideAtlas" id="Q04912"/>
<dbReference type="ProteomicsDB" id="58294">
    <molecule id="Q04912-1"/>
</dbReference>
<dbReference type="ProteomicsDB" id="58295">
    <molecule id="Q04912-2"/>
</dbReference>
<dbReference type="ProteomicsDB" id="58296">
    <molecule id="Q04912-3"/>
</dbReference>
<dbReference type="ProteomicsDB" id="58297">
    <molecule id="Q04912-4"/>
</dbReference>
<dbReference type="ProteomicsDB" id="58298">
    <molecule id="Q04912-5"/>
</dbReference>
<dbReference type="ProteomicsDB" id="58299">
    <molecule id="Q04912-6"/>
</dbReference>
<dbReference type="ABCD" id="Q04912">
    <property type="antibodies" value="13 sequenced antibodies"/>
</dbReference>
<dbReference type="Antibodypedia" id="2092">
    <property type="antibodies" value="972 antibodies from 40 providers"/>
</dbReference>
<dbReference type="DNASU" id="4486"/>
<dbReference type="Ensembl" id="ENST00000296474.8">
    <molecule id="Q04912-1"/>
    <property type="protein sequence ID" value="ENSP00000296474.3"/>
    <property type="gene ID" value="ENSG00000164078.15"/>
</dbReference>
<dbReference type="Ensembl" id="ENST00000344206.8">
    <molecule id="Q04912-2"/>
    <property type="protein sequence ID" value="ENSP00000341325.4"/>
    <property type="gene ID" value="ENSG00000164078.15"/>
</dbReference>
<dbReference type="Ensembl" id="ENST00000621387.4">
    <molecule id="Q04912-7"/>
    <property type="protein sequence ID" value="ENSP00000482642.1"/>
    <property type="gene ID" value="ENSG00000164078.15"/>
</dbReference>
<dbReference type="GeneID" id="4486"/>
<dbReference type="KEGG" id="hsa:4486"/>
<dbReference type="MANE-Select" id="ENST00000296474.8">
    <property type="protein sequence ID" value="ENSP00000296474.3"/>
    <property type="RefSeq nucleotide sequence ID" value="NM_002447.4"/>
    <property type="RefSeq protein sequence ID" value="NP_002438.2"/>
</dbReference>
<dbReference type="UCSC" id="uc003cxy.5">
    <molecule id="Q04912-1"/>
    <property type="organism name" value="human"/>
</dbReference>
<dbReference type="AGR" id="HGNC:7381"/>
<dbReference type="CTD" id="4486"/>
<dbReference type="DisGeNET" id="4486"/>
<dbReference type="GeneCards" id="MST1R"/>
<dbReference type="HGNC" id="HGNC:7381">
    <property type="gene designation" value="MST1R"/>
</dbReference>
<dbReference type="HPA" id="ENSG00000164078">
    <property type="expression patterns" value="Tissue enhanced (intestine, skin, stomach)"/>
</dbReference>
<dbReference type="MalaCards" id="MST1R"/>
<dbReference type="MIM" id="600168">
    <property type="type" value="gene"/>
</dbReference>
<dbReference type="MIM" id="617075">
    <property type="type" value="phenotype"/>
</dbReference>
<dbReference type="neXtProt" id="NX_Q04912"/>
<dbReference type="OpenTargets" id="ENSG00000164078"/>
<dbReference type="PharmGKB" id="PA31186"/>
<dbReference type="VEuPathDB" id="HostDB:ENSG00000164078"/>
<dbReference type="eggNOG" id="KOG1095">
    <property type="taxonomic scope" value="Eukaryota"/>
</dbReference>
<dbReference type="eggNOG" id="KOG3610">
    <property type="taxonomic scope" value="Eukaryota"/>
</dbReference>
<dbReference type="GeneTree" id="ENSGT00940000157842"/>
<dbReference type="HOGENOM" id="CLU_005158_0_0_1"/>
<dbReference type="InParanoid" id="Q04912"/>
<dbReference type="OrthoDB" id="9985181at2759"/>
<dbReference type="PAN-GO" id="Q04912">
    <property type="GO annotations" value="11 GO annotations based on evolutionary models"/>
</dbReference>
<dbReference type="PhylomeDB" id="Q04912"/>
<dbReference type="TreeFam" id="TF317402"/>
<dbReference type="BRENDA" id="2.7.10.1">
    <property type="organism ID" value="2681"/>
</dbReference>
<dbReference type="PathwayCommons" id="Q04912"/>
<dbReference type="Reactome" id="R-HSA-8852405">
    <property type="pathway name" value="Signaling by MST1"/>
</dbReference>
<dbReference type="SignaLink" id="Q04912"/>
<dbReference type="SIGNOR" id="Q04912"/>
<dbReference type="BioGRID-ORCS" id="4486">
    <property type="hits" value="8 hits in 1184 CRISPR screens"/>
</dbReference>
<dbReference type="ChiTaRS" id="MST1R">
    <property type="organism name" value="human"/>
</dbReference>
<dbReference type="EvolutionaryTrace" id="Q04912"/>
<dbReference type="GeneWiki" id="MST1R"/>
<dbReference type="GenomeRNAi" id="4486"/>
<dbReference type="Pharos" id="Q04912">
    <property type="development level" value="Tchem"/>
</dbReference>
<dbReference type="PRO" id="PR:Q04912"/>
<dbReference type="Proteomes" id="UP000005640">
    <property type="component" value="Chromosome 3"/>
</dbReference>
<dbReference type="RNAct" id="Q04912">
    <property type="molecule type" value="protein"/>
</dbReference>
<dbReference type="Bgee" id="ENSG00000164078">
    <property type="expression patterns" value="Expressed in mucosa of transverse colon and 116 other cell types or tissues"/>
</dbReference>
<dbReference type="ExpressionAtlas" id="Q04912">
    <property type="expression patterns" value="baseline and differential"/>
</dbReference>
<dbReference type="GO" id="GO:0009986">
    <property type="term" value="C:cell surface"/>
    <property type="evidence" value="ECO:0007005"/>
    <property type="project" value="UniProtKB"/>
</dbReference>
<dbReference type="GO" id="GO:0005886">
    <property type="term" value="C:plasma membrane"/>
    <property type="evidence" value="ECO:0000318"/>
    <property type="project" value="GO_Central"/>
</dbReference>
<dbReference type="GO" id="GO:0043235">
    <property type="term" value="C:receptor complex"/>
    <property type="evidence" value="ECO:0000318"/>
    <property type="project" value="GO_Central"/>
</dbReference>
<dbReference type="GO" id="GO:0001725">
    <property type="term" value="C:stress fiber"/>
    <property type="evidence" value="ECO:0007669"/>
    <property type="project" value="Ensembl"/>
</dbReference>
<dbReference type="GO" id="GO:0005773">
    <property type="term" value="C:vacuole"/>
    <property type="evidence" value="ECO:0007669"/>
    <property type="project" value="Ensembl"/>
</dbReference>
<dbReference type="GO" id="GO:0005524">
    <property type="term" value="F:ATP binding"/>
    <property type="evidence" value="ECO:0007669"/>
    <property type="project" value="UniProtKB-KW"/>
</dbReference>
<dbReference type="GO" id="GO:0019899">
    <property type="term" value="F:enzyme binding"/>
    <property type="evidence" value="ECO:0000353"/>
    <property type="project" value="UniProtKB"/>
</dbReference>
<dbReference type="GO" id="GO:0005011">
    <property type="term" value="F:macrophage colony-stimulating factor receptor activity"/>
    <property type="evidence" value="ECO:0000304"/>
    <property type="project" value="ProtInc"/>
</dbReference>
<dbReference type="GO" id="GO:0004714">
    <property type="term" value="F:transmembrane receptor protein tyrosine kinase activity"/>
    <property type="evidence" value="ECO:0000318"/>
    <property type="project" value="GO_Central"/>
</dbReference>
<dbReference type="GO" id="GO:0016477">
    <property type="term" value="P:cell migration"/>
    <property type="evidence" value="ECO:0000318"/>
    <property type="project" value="GO_Central"/>
</dbReference>
<dbReference type="GO" id="GO:0007169">
    <property type="term" value="P:cell surface receptor protein tyrosine kinase signaling pathway"/>
    <property type="evidence" value="ECO:0000318"/>
    <property type="project" value="GO_Central"/>
</dbReference>
<dbReference type="GO" id="GO:0006952">
    <property type="term" value="P:defense response"/>
    <property type="evidence" value="ECO:0000304"/>
    <property type="project" value="ProtInc"/>
</dbReference>
<dbReference type="GO" id="GO:0045087">
    <property type="term" value="P:innate immune response"/>
    <property type="evidence" value="ECO:0007669"/>
    <property type="project" value="UniProtKB-KW"/>
</dbReference>
<dbReference type="GO" id="GO:0007399">
    <property type="term" value="P:nervous system development"/>
    <property type="evidence" value="ECO:0000318"/>
    <property type="project" value="GO_Central"/>
</dbReference>
<dbReference type="GO" id="GO:0006909">
    <property type="term" value="P:phagocytosis"/>
    <property type="evidence" value="ECO:0000318"/>
    <property type="project" value="GO_Central"/>
</dbReference>
<dbReference type="GO" id="GO:0008284">
    <property type="term" value="P:positive regulation of cell population proliferation"/>
    <property type="evidence" value="ECO:0000304"/>
    <property type="project" value="ProtInc"/>
</dbReference>
<dbReference type="GO" id="GO:0043406">
    <property type="term" value="P:positive regulation of MAP kinase activity"/>
    <property type="evidence" value="ECO:0000314"/>
    <property type="project" value="UniProtKB"/>
</dbReference>
<dbReference type="GO" id="GO:0051897">
    <property type="term" value="P:positive regulation of phosphatidylinositol 3-kinase/protein kinase B signal transduction"/>
    <property type="evidence" value="ECO:0000314"/>
    <property type="project" value="UniProtKB"/>
</dbReference>
<dbReference type="GO" id="GO:0009615">
    <property type="term" value="P:response to virus"/>
    <property type="evidence" value="ECO:0000314"/>
    <property type="project" value="UniProtKB"/>
</dbReference>
<dbReference type="GO" id="GO:0007165">
    <property type="term" value="P:signal transduction"/>
    <property type="evidence" value="ECO:0000304"/>
    <property type="project" value="ProtInc"/>
</dbReference>
<dbReference type="GO" id="GO:0007338">
    <property type="term" value="P:single fertilization"/>
    <property type="evidence" value="ECO:0000304"/>
    <property type="project" value="ProtInc"/>
</dbReference>
<dbReference type="CDD" id="cd00102">
    <property type="entry name" value="IPT"/>
    <property type="match status" value="1"/>
</dbReference>
<dbReference type="CDD" id="cd01180">
    <property type="entry name" value="IPT_plexin_repeat1"/>
    <property type="match status" value="1"/>
</dbReference>
<dbReference type="CDD" id="cd01179">
    <property type="entry name" value="IPT_plexin_repeat2"/>
    <property type="match status" value="1"/>
</dbReference>
<dbReference type="CDD" id="cd05058">
    <property type="entry name" value="PTKc_Met_Ron"/>
    <property type="match status" value="1"/>
</dbReference>
<dbReference type="CDD" id="cd11279">
    <property type="entry name" value="Sema_RON"/>
    <property type="match status" value="1"/>
</dbReference>
<dbReference type="FunFam" id="1.10.510.10:FF:000093">
    <property type="entry name" value="Hepatocyte growth factor receptor"/>
    <property type="match status" value="1"/>
</dbReference>
<dbReference type="FunFam" id="2.60.40.10:FF:000213">
    <property type="entry name" value="Hepatocyte growth factor receptor"/>
    <property type="match status" value="1"/>
</dbReference>
<dbReference type="FunFam" id="2.60.40.10:FF:000679">
    <property type="entry name" value="Macrophage stimulating 1 receptor"/>
    <property type="match status" value="1"/>
</dbReference>
<dbReference type="FunFam" id="3.30.200.20:FF:000251">
    <property type="entry name" value="Macrophage stimulating 1 receptor"/>
    <property type="match status" value="1"/>
</dbReference>
<dbReference type="FunFam" id="2.130.10.10:FF:000194">
    <property type="entry name" value="Macrophage-stimulating 1 receptor a"/>
    <property type="match status" value="1"/>
</dbReference>
<dbReference type="FunFam" id="3.30.1680.10:FF:000006">
    <property type="entry name" value="Macrophage-stimulating 1 receptor b"/>
    <property type="match status" value="1"/>
</dbReference>
<dbReference type="Gene3D" id="2.60.40.10">
    <property type="entry name" value="Immunoglobulins"/>
    <property type="match status" value="2"/>
</dbReference>
<dbReference type="Gene3D" id="3.30.1680.10">
    <property type="entry name" value="ligand-binding face of the semaphorins, domain 2"/>
    <property type="match status" value="1"/>
</dbReference>
<dbReference type="Gene3D" id="3.30.200.20">
    <property type="entry name" value="Phosphorylase Kinase, domain 1"/>
    <property type="match status" value="1"/>
</dbReference>
<dbReference type="Gene3D" id="1.10.510.10">
    <property type="entry name" value="Transferase(Phosphotransferase) domain 1"/>
    <property type="match status" value="1"/>
</dbReference>
<dbReference type="Gene3D" id="2.130.10.10">
    <property type="entry name" value="YVTN repeat-like/Quinoprotein amine dehydrogenase"/>
    <property type="match status" value="1"/>
</dbReference>
<dbReference type="InterPro" id="IPR013783">
    <property type="entry name" value="Ig-like_fold"/>
</dbReference>
<dbReference type="InterPro" id="IPR014756">
    <property type="entry name" value="Ig_E-set"/>
</dbReference>
<dbReference type="InterPro" id="IPR002909">
    <property type="entry name" value="IPT_dom"/>
</dbReference>
<dbReference type="InterPro" id="IPR011009">
    <property type="entry name" value="Kinase-like_dom_sf"/>
</dbReference>
<dbReference type="InterPro" id="IPR002165">
    <property type="entry name" value="Plexin_repeat"/>
</dbReference>
<dbReference type="InterPro" id="IPR000719">
    <property type="entry name" value="Prot_kinase_dom"/>
</dbReference>
<dbReference type="InterPro" id="IPR017441">
    <property type="entry name" value="Protein_kinase_ATP_BS"/>
</dbReference>
<dbReference type="InterPro" id="IPR016201">
    <property type="entry name" value="PSI"/>
</dbReference>
<dbReference type="InterPro" id="IPR039413">
    <property type="entry name" value="RON_Sema"/>
</dbReference>
<dbReference type="InterPro" id="IPR050122">
    <property type="entry name" value="RTK"/>
</dbReference>
<dbReference type="InterPro" id="IPR001627">
    <property type="entry name" value="Semap_dom"/>
</dbReference>
<dbReference type="InterPro" id="IPR036352">
    <property type="entry name" value="Semap_dom_sf"/>
</dbReference>
<dbReference type="InterPro" id="IPR001245">
    <property type="entry name" value="Ser-Thr/Tyr_kinase_cat_dom"/>
</dbReference>
<dbReference type="InterPro" id="IPR008266">
    <property type="entry name" value="Tyr_kinase_AS"/>
</dbReference>
<dbReference type="InterPro" id="IPR020635">
    <property type="entry name" value="Tyr_kinase_cat_dom"/>
</dbReference>
<dbReference type="InterPro" id="IPR016244">
    <property type="entry name" value="Tyr_kinase_HGF/MSP_rcpt"/>
</dbReference>
<dbReference type="InterPro" id="IPR015943">
    <property type="entry name" value="WD40/YVTN_repeat-like_dom_sf"/>
</dbReference>
<dbReference type="PANTHER" id="PTHR24416:SF564">
    <property type="entry name" value="MACROPHAGE-STIMULATING PROTEIN RECEPTOR"/>
    <property type="match status" value="1"/>
</dbReference>
<dbReference type="PANTHER" id="PTHR24416">
    <property type="entry name" value="TYROSINE-PROTEIN KINASE RECEPTOR"/>
    <property type="match status" value="1"/>
</dbReference>
<dbReference type="Pfam" id="PF07714">
    <property type="entry name" value="PK_Tyr_Ser-Thr"/>
    <property type="match status" value="1"/>
</dbReference>
<dbReference type="Pfam" id="PF01437">
    <property type="entry name" value="PSI"/>
    <property type="match status" value="1"/>
</dbReference>
<dbReference type="Pfam" id="PF01403">
    <property type="entry name" value="Sema"/>
    <property type="match status" value="1"/>
</dbReference>
<dbReference type="Pfam" id="PF01833">
    <property type="entry name" value="TIG"/>
    <property type="match status" value="3"/>
</dbReference>
<dbReference type="PIRSF" id="PIRSF000617">
    <property type="entry name" value="TyrPK_HGF-R"/>
    <property type="match status" value="1"/>
</dbReference>
<dbReference type="PRINTS" id="PR00109">
    <property type="entry name" value="TYRKINASE"/>
</dbReference>
<dbReference type="SMART" id="SM00429">
    <property type="entry name" value="IPT"/>
    <property type="match status" value="3"/>
</dbReference>
<dbReference type="SMART" id="SM00423">
    <property type="entry name" value="PSI"/>
    <property type="match status" value="1"/>
</dbReference>
<dbReference type="SMART" id="SM00630">
    <property type="entry name" value="Sema"/>
    <property type="match status" value="1"/>
</dbReference>
<dbReference type="SMART" id="SM00219">
    <property type="entry name" value="TyrKc"/>
    <property type="match status" value="1"/>
</dbReference>
<dbReference type="SUPFAM" id="SSF81296">
    <property type="entry name" value="E set domains"/>
    <property type="match status" value="3"/>
</dbReference>
<dbReference type="SUPFAM" id="SSF103575">
    <property type="entry name" value="Plexin repeat"/>
    <property type="match status" value="1"/>
</dbReference>
<dbReference type="SUPFAM" id="SSF56112">
    <property type="entry name" value="Protein kinase-like (PK-like)"/>
    <property type="match status" value="1"/>
</dbReference>
<dbReference type="SUPFAM" id="SSF101912">
    <property type="entry name" value="Sema domain"/>
    <property type="match status" value="1"/>
</dbReference>
<dbReference type="PROSITE" id="PS00107">
    <property type="entry name" value="PROTEIN_KINASE_ATP"/>
    <property type="match status" value="1"/>
</dbReference>
<dbReference type="PROSITE" id="PS50011">
    <property type="entry name" value="PROTEIN_KINASE_DOM"/>
    <property type="match status" value="1"/>
</dbReference>
<dbReference type="PROSITE" id="PS00109">
    <property type="entry name" value="PROTEIN_KINASE_TYR"/>
    <property type="match status" value="1"/>
</dbReference>
<dbReference type="PROSITE" id="PS51004">
    <property type="entry name" value="SEMA"/>
    <property type="match status" value="1"/>
</dbReference>
<feature type="signal peptide" evidence="1">
    <location>
        <begin position="1"/>
        <end position="24"/>
    </location>
</feature>
<feature type="chain" id="PRO_0000024452" description="Macrophage-stimulating protein receptor">
    <location>
        <begin position="25"/>
        <end position="1400"/>
    </location>
</feature>
<feature type="chain" id="PRO_0000024453" description="Macrophage-stimulating protein receptor alpha chain" evidence="1">
    <location>
        <begin position="25"/>
        <end position="304"/>
    </location>
</feature>
<feature type="chain" id="PRO_0000024454" description="Macrophage-stimulating protein receptor beta chain" evidence="1">
    <location>
        <begin position="310"/>
        <end position="1400"/>
    </location>
</feature>
<feature type="topological domain" description="Extracellular" evidence="1">
    <location>
        <begin position="25"/>
        <end position="957"/>
    </location>
</feature>
<feature type="transmembrane region" description="Helical" evidence="1">
    <location>
        <begin position="958"/>
        <end position="978"/>
    </location>
</feature>
<feature type="topological domain" description="Cytoplasmic" evidence="1">
    <location>
        <begin position="979"/>
        <end position="1400"/>
    </location>
</feature>
<feature type="domain" description="Sema" evidence="3">
    <location>
        <begin position="31"/>
        <end position="522"/>
    </location>
</feature>
<feature type="domain" description="IPT/TIG 1">
    <location>
        <begin position="569"/>
        <end position="671"/>
    </location>
</feature>
<feature type="domain" description="IPT/TIG 2">
    <location>
        <begin position="684"/>
        <end position="767"/>
    </location>
</feature>
<feature type="domain" description="IPT/TIG 3">
    <location>
        <begin position="770"/>
        <end position="860"/>
    </location>
</feature>
<feature type="domain" description="Protein kinase" evidence="2">
    <location>
        <begin position="1082"/>
        <end position="1345"/>
    </location>
</feature>
<feature type="region of interest" description="Disordered" evidence="5">
    <location>
        <begin position="1367"/>
        <end position="1400"/>
    </location>
</feature>
<feature type="active site" description="Proton acceptor" evidence="28">
    <location>
        <position position="1208"/>
    </location>
</feature>
<feature type="binding site">
    <location>
        <begin position="1088"/>
        <end position="1096"/>
    </location>
    <ligand>
        <name>ATP</name>
        <dbReference type="ChEBI" id="CHEBI:30616"/>
    </ligand>
</feature>
<feature type="binding site">
    <location>
        <position position="1114"/>
    </location>
    <ligand>
        <name>ATP</name>
        <dbReference type="ChEBI" id="CHEBI:30616"/>
    </ligand>
</feature>
<feature type="binding site">
    <location>
        <begin position="1161"/>
        <end position="1164"/>
    </location>
    <ligand>
        <name>ATP</name>
        <dbReference type="ChEBI" id="CHEBI:30616"/>
    </ligand>
</feature>
<feature type="binding site">
    <location>
        <position position="1212"/>
    </location>
    <ligand>
        <name>ATP</name>
        <dbReference type="ChEBI" id="CHEBI:30616"/>
    </ligand>
</feature>
<feature type="modified residue" description="Phosphotyrosine; by autocatalysis" evidence="27 28">
    <location>
        <position position="1238"/>
    </location>
</feature>
<feature type="modified residue" description="Phosphotyrosine; by autocatalysis" evidence="27">
    <location>
        <position position="1239"/>
    </location>
</feature>
<feature type="modified residue" description="Phosphotyrosine; by autocatalysis" evidence="11">
    <location>
        <position position="1353"/>
    </location>
</feature>
<feature type="modified residue" description="Phosphotyrosine; by autocatalysis" evidence="11">
    <location>
        <position position="1360"/>
    </location>
</feature>
<feature type="glycosylation site" description="N-linked (GlcNAc...) asparagine" evidence="1">
    <location>
        <position position="66"/>
    </location>
</feature>
<feature type="glycosylation site" description="N-linked (GlcNAc...) asparagine" evidence="1">
    <location>
        <position position="419"/>
    </location>
</feature>
<feature type="glycosylation site" description="N-linked (GlcNAc...) asparagine" evidence="1">
    <location>
        <position position="458"/>
    </location>
</feature>
<feature type="glycosylation site" description="N-linked (GlcNAc...) asparagine" evidence="16">
    <location>
        <position position="488"/>
    </location>
</feature>
<feature type="glycosylation site" description="N-linked (GlcNAc...) asparagine" evidence="1">
    <location>
        <position position="654"/>
    </location>
</feature>
<feature type="glycosylation site" description="N-linked (GlcNAc...) asparagine" evidence="1">
    <location>
        <position position="720"/>
    </location>
</feature>
<feature type="glycosylation site" description="N-linked (GlcNAc...) asparagine" evidence="1">
    <location>
        <position position="841"/>
    </location>
</feature>
<feature type="glycosylation site" description="N-linked (GlcNAc...) asparagine" evidence="1">
    <location>
        <position position="897"/>
    </location>
</feature>
<feature type="disulfide bond" evidence="3 16">
    <location>
        <begin position="101"/>
        <end position="104"/>
    </location>
</feature>
<feature type="disulfide bond" evidence="3 16">
    <location>
        <begin position="107"/>
        <end position="162"/>
    </location>
</feature>
<feature type="disulfide bond" evidence="3 16">
    <location>
        <begin position="135"/>
        <end position="143"/>
    </location>
</feature>
<feature type="disulfide bond" evidence="3 16">
    <location>
        <begin position="174"/>
        <end position="177"/>
    </location>
</feature>
<feature type="disulfide bond" evidence="3 16">
    <location>
        <begin position="300"/>
        <end position="367"/>
    </location>
</feature>
<feature type="disulfide bond" evidence="3 16">
    <location>
        <begin position="385"/>
        <end position="407"/>
    </location>
</feature>
<feature type="disulfide bond" evidence="3 16">
    <location>
        <begin position="386"/>
        <end position="422"/>
    </location>
</feature>
<feature type="disulfide bond" evidence="3 16">
    <location>
        <begin position="527"/>
        <end position="545"/>
    </location>
</feature>
<feature type="disulfide bond" evidence="3 16">
    <location>
        <begin position="533"/>
        <end position="567"/>
    </location>
</feature>
<feature type="disulfide bond" evidence="3 16">
    <location>
        <begin position="536"/>
        <end position="552"/>
    </location>
</feature>
<feature type="disulfide bond" evidence="3 16">
    <location>
        <begin position="548"/>
        <end position="558"/>
    </location>
</feature>
<feature type="splice variant" id="VSP_038919" description="In isoform RON-2 and isoform RON-5." evidence="24">
    <location>
        <begin position="411"/>
        <end position="516"/>
    </location>
</feature>
<feature type="splice variant" id="VSP_038920" description="In isoform RON-1." evidence="24">
    <original>ELVRSLNYLLYVSNFSLGDSG</original>
    <variation>GPHPHSPLALGPCLHPHFAHI</variation>
    <location>
        <begin position="475"/>
        <end position="495"/>
    </location>
</feature>
<feature type="splice variant" id="VSP_038921" description="In isoform RON-1." evidence="24">
    <location>
        <begin position="496"/>
        <end position="1400"/>
    </location>
</feature>
<feature type="splice variant" id="VSP_038922" description="In isoform RON-2 and isoform RON-4." evidence="24">
    <original>PVPRKDFVEEFECELEPLGT</original>
    <variation>YNLVPPLPFPEGGNQAAPSP</variation>
    <location>
        <begin position="628"/>
        <end position="647"/>
    </location>
</feature>
<feature type="splice variant" id="VSP_038923" description="In isoform RON-2 and isoform RON-4." evidence="24">
    <location>
        <begin position="648"/>
        <end position="1400"/>
    </location>
</feature>
<feature type="splice variant" id="VSP_005007" description="In isoform Delta-RON." evidence="26">
    <location>
        <begin position="884"/>
        <end position="932"/>
    </location>
</feature>
<feature type="splice variant" id="VSP_038924" description="In isoform RON-3." evidence="24">
    <original>YIGLGAVADCVGINVTVGGESCQH</original>
    <variation>VSVRDRGRDSWGSESRGQPTGWSS</variation>
    <location>
        <begin position="884"/>
        <end position="907"/>
    </location>
</feature>
<feature type="splice variant" id="VSP_038925" description="In isoform RON-3." evidence="24">
    <location>
        <begin position="908"/>
        <end position="1400"/>
    </location>
</feature>
<feature type="sequence variant" id="VAR_041768" description="In dbSNP:rs35887539." evidence="12">
    <original>R</original>
    <variation>S</variation>
    <location>
        <position position="75"/>
    </location>
</feature>
<feature type="sequence variant" id="VAR_041769" description="In dbSNP:rs55908300." evidence="12">
    <original>P</original>
    <variation>T</variation>
    <location>
        <position position="95"/>
    </location>
</feature>
<feature type="sequence variant" id="VAR_041770" description="In dbSNP:rs55633379." evidence="12">
    <original>R</original>
    <variation>C</variation>
    <location>
        <position position="185"/>
    </location>
</feature>
<feature type="sequence variant" id="VAR_076928" description="In NPCA3; dbSNP:rs200046052." evidence="17">
    <original>R</original>
    <variation>H</variation>
    <location>
        <position position="306"/>
    </location>
</feature>
<feature type="sequence variant" id="VAR_006350" description="In dbSNP:rs2230593." evidence="12 22">
    <original>R</original>
    <variation>Q</variation>
    <location>
        <position position="322"/>
    </location>
</feature>
<feature type="sequence variant" id="VAR_076929" description="In NPCA3; uncertain significance; dbSNP:rs200757776." evidence="17">
    <original>A</original>
    <variation>T</variation>
    <location>
        <position position="327"/>
    </location>
</feature>
<feature type="sequence variant" id="VAR_041771" description="In dbSNP:rs35924402." evidence="12">
    <original>G</original>
    <variation>D</variation>
    <location>
        <position position="356"/>
    </location>
</feature>
<feature type="sequence variant" id="VAR_029238" description="In dbSNP:rs2230591." evidence="12">
    <original>S</original>
    <variation>L</variation>
    <location>
        <position position="434"/>
    </location>
</feature>
<feature type="sequence variant" id="VAR_029239" description="In dbSNP:rs2230592.">
    <original>N</original>
    <variation>S</variation>
    <location>
        <position position="440"/>
    </location>
</feature>
<feature type="sequence variant" id="VAR_041772" description="In dbSNP:rs34564898." evidence="12">
    <original>G</original>
    <variation>D</variation>
    <location>
        <position position="465"/>
    </location>
</feature>
<feature type="sequence variant" id="VAR_041773" description="In dbSNP:rs34350470." evidence="12">
    <original>R</original>
    <variation>C</variation>
    <location>
        <position position="504"/>
    </location>
</feature>
<feature type="sequence variant" id="VAR_041774" description="In dbSNP:rs2230590." evidence="12 22">
    <original>Q</original>
    <variation>R</variation>
    <location>
        <position position="523"/>
    </location>
</feature>
<feature type="sequence variant" id="VAR_041775" description="In dbSNP:rs35986685." evidence="12">
    <original>Q</original>
    <variation>P</variation>
    <location>
        <position position="613"/>
    </location>
</feature>
<feature type="sequence variant" id="VAR_076930" description="In NPCA3; uncertain significance; dbSNP:rs201024956." evidence="17">
    <original>V</original>
    <variation>G</variation>
    <location>
        <position position="670"/>
    </location>
</feature>
<feature type="sequence variant" id="VAR_041776" description="In dbSNP:rs56091918." evidence="12">
    <original>V</original>
    <variation>M</variation>
    <location>
        <position position="900"/>
    </location>
</feature>
<feature type="sequence variant" id="VAR_076931" description="In NPCA3; uncertain significance; dbSNP:rs773053723." evidence="17">
    <original>A</original>
    <variation>T</variation>
    <location>
        <position position="973"/>
    </location>
</feature>
<feature type="sequence variant" id="VAR_061749" description="In dbSNP:rs7433231.">
    <original>G</original>
    <variation>S</variation>
    <location>
        <position position="1195"/>
    </location>
</feature>
<feature type="sequence variant" id="VAR_041777" description="In dbSNP:rs528985327." evidence="12">
    <original>R</original>
    <variation>G</variation>
    <location>
        <position position="1304"/>
    </location>
</feature>
<feature type="sequence variant" id="VAR_024577" description="In dbSNP:rs1062633." evidence="12">
    <original>R</original>
    <variation>G</variation>
    <location>
        <position position="1335"/>
    </location>
</feature>
<feature type="sequence variant" id="VAR_041778" description="In dbSNP:rs56330223." evidence="12">
    <original>Y</original>
    <variation>C</variation>
    <location>
        <position position="1360"/>
    </location>
</feature>
<feature type="sequence conflict" description="In Ref. 1; CAA49634." evidence="26" ref="1">
    <original>A</original>
    <variation>G</variation>
    <location>
        <position position="209"/>
    </location>
</feature>
<feature type="sequence conflict" description="In Ref. 3; ACF47620." evidence="26" ref="3">
    <original>R</original>
    <variation>RQ</variation>
    <location>
        <position position="813"/>
    </location>
</feature>
<feature type="strand" evidence="30">
    <location>
        <begin position="43"/>
        <end position="45"/>
    </location>
</feature>
<feature type="strand" evidence="30">
    <location>
        <begin position="48"/>
        <end position="50"/>
    </location>
</feature>
<feature type="strand" evidence="30">
    <location>
        <begin position="55"/>
        <end position="62"/>
    </location>
</feature>
<feature type="strand" evidence="31">
    <location>
        <begin position="64"/>
        <end position="66"/>
    </location>
</feature>
<feature type="strand" evidence="30">
    <location>
        <begin position="68"/>
        <end position="74"/>
    </location>
</feature>
<feature type="strand" evidence="30">
    <location>
        <begin position="77"/>
        <end position="81"/>
    </location>
</feature>
<feature type="strand" evidence="30">
    <location>
        <begin position="87"/>
        <end position="92"/>
    </location>
</feature>
<feature type="strand" evidence="31">
    <location>
        <begin position="96"/>
        <end position="98"/>
    </location>
</feature>
<feature type="helix" evidence="30">
    <location>
        <begin position="102"/>
        <end position="105"/>
    </location>
</feature>
<feature type="strand" evidence="30">
    <location>
        <begin position="108"/>
        <end position="110"/>
    </location>
</feature>
<feature type="strand" evidence="30">
    <location>
        <begin position="120"/>
        <end position="126"/>
    </location>
</feature>
<feature type="turn" evidence="30">
    <location>
        <begin position="127"/>
        <end position="130"/>
    </location>
</feature>
<feature type="strand" evidence="30">
    <location>
        <begin position="131"/>
        <end position="138"/>
    </location>
</feature>
<feature type="helix" evidence="30">
    <location>
        <begin position="139"/>
        <end position="141"/>
    </location>
</feature>
<feature type="strand" evidence="30">
    <location>
        <begin position="143"/>
        <end position="151"/>
    </location>
</feature>
<feature type="strand" evidence="30">
    <location>
        <begin position="154"/>
        <end position="157"/>
    </location>
</feature>
<feature type="strand" evidence="31">
    <location>
        <begin position="161"/>
        <end position="163"/>
    </location>
</feature>
<feature type="turn" evidence="31">
    <location>
        <begin position="166"/>
        <end position="168"/>
    </location>
</feature>
<feature type="strand" evidence="30">
    <location>
        <begin position="184"/>
        <end position="191"/>
    </location>
</feature>
<feature type="strand" evidence="30">
    <location>
        <begin position="194"/>
        <end position="201"/>
    </location>
</feature>
<feature type="helix" evidence="30">
    <location>
        <begin position="205"/>
        <end position="208"/>
    </location>
</feature>
<feature type="strand" evidence="30">
    <location>
        <begin position="209"/>
        <end position="211"/>
    </location>
</feature>
<feature type="strand" evidence="30">
    <location>
        <begin position="215"/>
        <end position="221"/>
    </location>
</feature>
<feature type="strand" evidence="30">
    <location>
        <begin position="233"/>
        <end position="235"/>
    </location>
</feature>
<feature type="helix" evidence="30">
    <location>
        <begin position="239"/>
        <end position="242"/>
    </location>
</feature>
<feature type="strand" evidence="30">
    <location>
        <begin position="248"/>
        <end position="255"/>
    </location>
</feature>
<feature type="strand" evidence="30">
    <location>
        <begin position="258"/>
        <end position="268"/>
    </location>
</feature>
<feature type="strand" evidence="31">
    <location>
        <begin position="269"/>
        <end position="271"/>
    </location>
</feature>
<feature type="strand" evidence="30">
    <location>
        <begin position="275"/>
        <end position="288"/>
    </location>
</feature>
<feature type="helix" evidence="31">
    <location>
        <begin position="290"/>
        <end position="292"/>
    </location>
</feature>
<feature type="strand" evidence="30">
    <location>
        <begin position="294"/>
        <end position="302"/>
    </location>
</feature>
<feature type="strand" evidence="31">
    <location>
        <begin position="309"/>
        <end position="311"/>
    </location>
</feature>
<feature type="strand" evidence="30">
    <location>
        <begin position="316"/>
        <end position="318"/>
    </location>
</feature>
<feature type="strand" evidence="30">
    <location>
        <begin position="320"/>
        <end position="328"/>
    </location>
</feature>
<feature type="helix" evidence="30">
    <location>
        <begin position="331"/>
        <end position="337"/>
    </location>
</feature>
<feature type="strand" evidence="30">
    <location>
        <begin position="344"/>
        <end position="351"/>
    </location>
</feature>
<feature type="strand" evidence="30">
    <location>
        <begin position="365"/>
        <end position="370"/>
    </location>
</feature>
<feature type="helix" evidence="30">
    <location>
        <begin position="371"/>
        <end position="386"/>
    </location>
</feature>
<feature type="strand" evidence="30">
    <location>
        <begin position="387"/>
        <end position="389"/>
    </location>
</feature>
<feature type="turn" evidence="30">
    <location>
        <begin position="399"/>
        <end position="401"/>
    </location>
</feature>
<feature type="strand" evidence="31">
    <location>
        <begin position="407"/>
        <end position="409"/>
    </location>
</feature>
<feature type="helix" evidence="30">
    <location>
        <begin position="422"/>
        <end position="424"/>
    </location>
</feature>
<feature type="strand" evidence="30">
    <location>
        <begin position="433"/>
        <end position="436"/>
    </location>
</feature>
<feature type="turn" evidence="30">
    <location>
        <begin position="438"/>
        <end position="445"/>
    </location>
</feature>
<feature type="strand" evidence="30">
    <location>
        <begin position="448"/>
        <end position="456"/>
    </location>
</feature>
<feature type="strand" evidence="30">
    <location>
        <begin position="459"/>
        <end position="466"/>
    </location>
</feature>
<feature type="strand" evidence="30">
    <location>
        <begin position="469"/>
        <end position="475"/>
    </location>
</feature>
<feature type="strand" evidence="30">
    <location>
        <begin position="485"/>
        <end position="491"/>
    </location>
</feature>
<feature type="strand" evidence="30">
    <location>
        <begin position="503"/>
        <end position="505"/>
    </location>
</feature>
<feature type="strand" evidence="30">
    <location>
        <begin position="508"/>
        <end position="513"/>
    </location>
</feature>
<feature type="strand" evidence="30">
    <location>
        <begin position="516"/>
        <end position="521"/>
    </location>
</feature>
<feature type="helix" evidence="30">
    <location>
        <begin position="527"/>
        <end position="529"/>
    </location>
</feature>
<feature type="helix" evidence="30">
    <location>
        <begin position="533"/>
        <end position="538"/>
    </location>
</feature>
<feature type="helix" evidence="30">
    <location>
        <begin position="541"/>
        <end position="543"/>
    </location>
</feature>
<feature type="strand" evidence="30">
    <location>
        <begin position="549"/>
        <end position="553"/>
    </location>
</feature>
<feature type="helix" evidence="30">
    <location>
        <begin position="555"/>
        <end position="557"/>
    </location>
</feature>
<feature type="turn" evidence="30">
    <location>
        <begin position="559"/>
        <end position="561"/>
    </location>
</feature>
<feature type="strand" evidence="31">
    <location>
        <begin position="563"/>
        <end position="567"/>
    </location>
</feature>
<feature type="strand" evidence="31">
    <location>
        <begin position="570"/>
        <end position="575"/>
    </location>
</feature>
<feature type="strand" evidence="31">
    <location>
        <begin position="578"/>
        <end position="580"/>
    </location>
</feature>
<feature type="strand" evidence="31">
    <location>
        <begin position="589"/>
        <end position="593"/>
    </location>
</feature>
<feature type="strand" evidence="31">
    <location>
        <begin position="609"/>
        <end position="615"/>
    </location>
</feature>
<feature type="strand" evidence="31">
    <location>
        <begin position="639"/>
        <end position="641"/>
    </location>
</feature>
<feature type="strand" evidence="31">
    <location>
        <begin position="653"/>
        <end position="659"/>
    </location>
</feature>
<feature type="strand" evidence="31">
    <location>
        <begin position="672"/>
        <end position="682"/>
    </location>
</feature>
<feature type="helix" evidence="29">
    <location>
        <begin position="1064"/>
        <end position="1069"/>
    </location>
</feature>
<feature type="helix" evidence="29">
    <location>
        <begin position="1071"/>
        <end position="1073"/>
    </location>
</feature>
<feature type="helix" evidence="29">
    <location>
        <begin position="1077"/>
        <end position="1079"/>
    </location>
</feature>
<feature type="strand" evidence="29">
    <location>
        <begin position="1080"/>
        <end position="1091"/>
    </location>
</feature>
<feature type="strand" evidence="29">
    <location>
        <begin position="1094"/>
        <end position="1102"/>
    </location>
</feature>
<feature type="strand" evidence="29">
    <location>
        <begin position="1104"/>
        <end position="1106"/>
    </location>
</feature>
<feature type="strand" evidence="29">
    <location>
        <begin position="1108"/>
        <end position="1116"/>
    </location>
</feature>
<feature type="helix" evidence="29">
    <location>
        <begin position="1122"/>
        <end position="1136"/>
    </location>
</feature>
<feature type="strand" evidence="29">
    <location>
        <begin position="1148"/>
        <end position="1150"/>
    </location>
</feature>
<feature type="strand" evidence="29">
    <location>
        <begin position="1153"/>
        <end position="1155"/>
    </location>
</feature>
<feature type="strand" evidence="29">
    <location>
        <begin position="1158"/>
        <end position="1161"/>
    </location>
</feature>
<feature type="helix" evidence="29">
    <location>
        <begin position="1169"/>
        <end position="1174"/>
    </location>
</feature>
<feature type="helix" evidence="29">
    <location>
        <begin position="1182"/>
        <end position="1201"/>
    </location>
</feature>
<feature type="helix" evidence="29">
    <location>
        <begin position="1211"/>
        <end position="1213"/>
    </location>
</feature>
<feature type="strand" evidence="29">
    <location>
        <begin position="1214"/>
        <end position="1216"/>
    </location>
</feature>
<feature type="strand" evidence="29">
    <location>
        <begin position="1222"/>
        <end position="1224"/>
    </location>
</feature>
<feature type="turn" evidence="29">
    <location>
        <begin position="1232"/>
        <end position="1235"/>
    </location>
</feature>
<feature type="helix" evidence="29">
    <location>
        <begin position="1236"/>
        <end position="1239"/>
    </location>
</feature>
<feature type="helix" evidence="29">
    <location>
        <begin position="1250"/>
        <end position="1253"/>
    </location>
</feature>
<feature type="helix" evidence="29">
    <location>
        <begin position="1256"/>
        <end position="1259"/>
    </location>
</feature>
<feature type="helix" evidence="29">
    <location>
        <begin position="1266"/>
        <end position="1282"/>
    </location>
</feature>
<feature type="turn" evidence="29">
    <location>
        <begin position="1287"/>
        <end position="1290"/>
    </location>
</feature>
<feature type="helix" evidence="29">
    <location>
        <begin position="1293"/>
        <end position="1295"/>
    </location>
</feature>
<feature type="helix" evidence="29">
    <location>
        <begin position="1296"/>
        <end position="1301"/>
    </location>
</feature>
<feature type="helix" evidence="29">
    <location>
        <begin position="1314"/>
        <end position="1323"/>
    </location>
</feature>
<feature type="helix" evidence="29">
    <location>
        <begin position="1328"/>
        <end position="1330"/>
    </location>
</feature>
<feature type="helix" evidence="29">
    <location>
        <begin position="1334"/>
        <end position="1347"/>
    </location>
</feature>
<name>RON_HUMAN</name>
<gene>
    <name type="primary">MST1R</name>
    <name type="synonym">PTK8</name>
    <name type="synonym">RON</name>
</gene>
<protein>
    <recommendedName>
        <fullName>Macrophage-stimulating protein receptor</fullName>
        <shortName>MSP receptor</shortName>
        <ecNumber>2.7.10.1</ecNumber>
    </recommendedName>
    <alternativeName>
        <fullName>CDw136</fullName>
    </alternativeName>
    <alternativeName>
        <fullName>Protein-tyrosine kinase 8</fullName>
    </alternativeName>
    <alternativeName>
        <fullName>p185-Ron</fullName>
    </alternativeName>
    <cdAntigenName>CD136</cdAntigenName>
    <component>
        <recommendedName>
            <fullName>Macrophage-stimulating protein receptor alpha chain</fullName>
        </recommendedName>
    </component>
    <component>
        <recommendedName>
            <fullName>Macrophage-stimulating protein receptor beta chain</fullName>
        </recommendedName>
    </component>
</protein>
<accession>Q04912</accession>
<accession>A0A087WZG2</accession>
<accession>B5A944</accession>
<accession>B5A945</accession>
<accession>B5A946</accession>
<accession>B5A947</accession>
<evidence type="ECO:0000255" key="1"/>
<evidence type="ECO:0000255" key="2">
    <source>
        <dbReference type="PROSITE-ProRule" id="PRU00159"/>
    </source>
</evidence>
<evidence type="ECO:0000255" key="3">
    <source>
        <dbReference type="PROSITE-ProRule" id="PRU00352"/>
    </source>
</evidence>
<evidence type="ECO:0000255" key="4">
    <source>
        <dbReference type="PROSITE-ProRule" id="PRU10028"/>
    </source>
</evidence>
<evidence type="ECO:0000256" key="5">
    <source>
        <dbReference type="SAM" id="MobiDB-lite"/>
    </source>
</evidence>
<evidence type="ECO:0000269" key="6">
    <source>
    </source>
</evidence>
<evidence type="ECO:0000269" key="7">
    <source>
    </source>
</evidence>
<evidence type="ECO:0000269" key="8">
    <source>
    </source>
</evidence>
<evidence type="ECO:0000269" key="9">
    <source>
    </source>
</evidence>
<evidence type="ECO:0000269" key="10">
    <source>
    </source>
</evidence>
<evidence type="ECO:0000269" key="11">
    <source>
    </source>
</evidence>
<evidence type="ECO:0000269" key="12">
    <source>
    </source>
</evidence>
<evidence type="ECO:0000269" key="13">
    <source>
    </source>
</evidence>
<evidence type="ECO:0000269" key="14">
    <source>
    </source>
</evidence>
<evidence type="ECO:0000269" key="15">
    <source>
    </source>
</evidence>
<evidence type="ECO:0000269" key="16">
    <source>
    </source>
</evidence>
<evidence type="ECO:0000269" key="17">
    <source>
    </source>
</evidence>
<evidence type="ECO:0000269" key="18">
    <source>
    </source>
</evidence>
<evidence type="ECO:0000269" key="19">
    <source>
    </source>
</evidence>
<evidence type="ECO:0000269" key="20">
    <source>
    </source>
</evidence>
<evidence type="ECO:0000269" key="21">
    <source>
    </source>
</evidence>
<evidence type="ECO:0000269" key="22">
    <source>
    </source>
</evidence>
<evidence type="ECO:0000269" key="23">
    <source>
    </source>
</evidence>
<evidence type="ECO:0000303" key="24">
    <source>
    </source>
</evidence>
<evidence type="ECO:0000303" key="25">
    <source>
    </source>
</evidence>
<evidence type="ECO:0000305" key="26"/>
<evidence type="ECO:0000305" key="27">
    <source>
    </source>
</evidence>
<evidence type="ECO:0000305" key="28">
    <source>
    </source>
</evidence>
<evidence type="ECO:0007829" key="29">
    <source>
        <dbReference type="PDB" id="3PLS"/>
    </source>
</evidence>
<evidence type="ECO:0007829" key="30">
    <source>
        <dbReference type="PDB" id="4FWW"/>
    </source>
</evidence>
<evidence type="ECO:0007829" key="31">
    <source>
        <dbReference type="PDB" id="4QT8"/>
    </source>
</evidence>
<sequence length="1400" mass="152241">MELLPPLPQSFLLLLLLPAKPAAGEDWQCPRTPYAASRDFDVKYVVPSFSAGGLVQAMVTYEGDRNESAVFVAIRNRLHVLGPDLKSVQSLATGPAGDPGCQTCAACGPGPHGPPGDTDTKVLVLDPALPALVSCGSSLQGRCFLHDLEPQGTAVHLAAPACLFSAHHNRPDDCPDCVASPLGTRVTVVEQGQASYFYVASSLDAAVAASFSPRSVSIRRLKADASGFAPGFVALSVLPKHLVSYSIEYVHSFHTGAFVYFLTVQPASVTDDPSALHTRLARLSATEPELGDYRELVLDCRFAPKRRRRGAPEGGQPYPVLRVAHSAPVGAQLATELSIAEGQEVLFGVFVTGKDGGPGVGPNSVVCAFPIDLLDTLIDEGVERCCESPVHPGLRRGLDFFQSPSFCPNPPGLEALSPNTSCRHFPLLVSSSFSRVDLFNGLLGPVQVTALYVTRLDNVTVAHMGTMDGRILQVELVRSLNYLLYVSNFSLGDSGQPVQRDVSRLGDHLLFASGDQVFQVPIQGPGCRHFLTCGRCLRAWHFMGCGWCGNMCGQQKECPGSWQQDHCPPKLTEFHPHSGPLRGSTRLTLCGSNFYLHPSGLVPEGTHQVTVGQSPCRPLPKDSSKLRPVPRKDFVEEFECELEPLGTQAVGPTNVSLTVTNMPPGKHFRVDGTSVLRGFSFMEPVLIAVQPLFGPRAGGTCLTLEGQSLSVGTSRAVLVNGTECLLARVSEGQLLCATPPGATVASVPLSLQVGGAQVPGSWTFQYREDPVVLSISPNCGYINSHITICGQHLTSAWHLVLSFHDGLRAVESRCERQLPEQQLCRLPEYVVRDPQGWVAGNLSARGDGAAGFTLPGFRFLPPPHPPSANLVPLKPEEHAIKFEYIGLGAVADCVGINVTVGGESCQHEFRGDMVVCPLPPSLQLGQDGAPLQVCVDGECHILGRVVRPGPDGVPQSTLLGILLPLLLLVAALATALVFSYWWRRKQLVLPPNLNDLASLDQTAGATPLPILYSGSDYRSGLALPAIDGLDSTTCVHGASFSDSEDESCVPLLRKESIQLRDLDSALLAEVKDVLIPHERVVTHSDRVIGKGHFGVVYHGEYIDQAQNRIQCAIKSLSRITEMQQVEAFLREGLLMRGLNHPNVLALIGIMLPPEGLPHVLLPYMCHGDLLQFIRSPQRNPTVKDLISFGLQVARGMEYLAEQKFVHRDLAARNCMLDESFTVKVADFGLARDILDREYYSVQQHRHARLPVKWMALESLQTYRFTTKSDVWSFGVLLWELLTRGAPPYRHIDPFDLTHFLAQGRRLPQPEYCPDSLYQVMQQCWEADPAVRPTFRVLVGEVEQIVSALLGDHYVQLPATYMNLGPSTSHEMNVRPEQPQFSPMPGNVRRPRPLSEPPRPT</sequence>
<reference key="1">
    <citation type="journal article" date="1993" name="Oncogene">
        <title>A novel putative receptor protein tyrosine kinase of the met family.</title>
        <authorList>
            <person name="Ronsin C."/>
            <person name="Muscatelli F."/>
            <person name="Mattei M.-G."/>
            <person name="Breathnach R."/>
        </authorList>
    </citation>
    <scope>NUCLEOTIDE SEQUENCE [MRNA] (ISOFORM RON)</scope>
    <scope>VARIANTS GLN-322 AND ARG-523</scope>
    <source>
        <tissue>Keratinocyte</tissue>
    </source>
</reference>
<reference key="2">
    <citation type="journal article" date="1996" name="Mol. Cell. Biol.">
        <title>A splicing variant of the RON transcript induces constitutive tyrosine kinase activity and an invasive phenotype.</title>
        <authorList>
            <person name="Collesi C."/>
            <person name="Santoro M.M."/>
            <person name="Gaudino G."/>
            <person name="Comoglio P.M."/>
        </authorList>
    </citation>
    <scope>NUCLEOTIDE SEQUENCE [MRNA]</scope>
    <scope>ALTERNATIVE SPLICING</scope>
</reference>
<reference key="3">
    <citation type="journal article" date="2008" name="Arthritis Res. Ther.">
        <title>Novel splice variants derived from the receptor tyrosine kinase superfamily are potential therapeutics for rheumatoid arthritis.</title>
        <authorList>
            <person name="Jin P."/>
            <person name="Zhang J."/>
            <person name="Sumariwalla P.F."/>
            <person name="Ni I."/>
            <person name="Jorgensen B."/>
            <person name="Crawford D."/>
            <person name="Phillips S."/>
            <person name="Feldmann M."/>
            <person name="Shepard H.M."/>
            <person name="Paleolog E.M."/>
        </authorList>
    </citation>
    <scope>NUCLEOTIDE SEQUENCE [MRNA] (ISOFORMS RON-1; RON-2; RON-3 AND RON-4)</scope>
</reference>
<reference key="4">
    <citation type="journal article" date="2006" name="Nature">
        <title>The DNA sequence, annotation and analysis of human chromosome 3.</title>
        <authorList>
            <person name="Muzny D.M."/>
            <person name="Scherer S.E."/>
            <person name="Kaul R."/>
            <person name="Wang J."/>
            <person name="Yu J."/>
            <person name="Sudbrak R."/>
            <person name="Buhay C.J."/>
            <person name="Chen R."/>
            <person name="Cree A."/>
            <person name="Ding Y."/>
            <person name="Dugan-Rocha S."/>
            <person name="Gill R."/>
            <person name="Gunaratne P."/>
            <person name="Harris R.A."/>
            <person name="Hawes A.C."/>
            <person name="Hernandez J."/>
            <person name="Hodgson A.V."/>
            <person name="Hume J."/>
            <person name="Jackson A."/>
            <person name="Khan Z.M."/>
            <person name="Kovar-Smith C."/>
            <person name="Lewis L.R."/>
            <person name="Lozado R.J."/>
            <person name="Metzker M.L."/>
            <person name="Milosavljevic A."/>
            <person name="Miner G.R."/>
            <person name="Morgan M.B."/>
            <person name="Nazareth L.V."/>
            <person name="Scott G."/>
            <person name="Sodergren E."/>
            <person name="Song X.-Z."/>
            <person name="Steffen D."/>
            <person name="Wei S."/>
            <person name="Wheeler D.A."/>
            <person name="Wright M.W."/>
            <person name="Worley K.C."/>
            <person name="Yuan Y."/>
            <person name="Zhang Z."/>
            <person name="Adams C.Q."/>
            <person name="Ansari-Lari M.A."/>
            <person name="Ayele M."/>
            <person name="Brown M.J."/>
            <person name="Chen G."/>
            <person name="Chen Z."/>
            <person name="Clendenning J."/>
            <person name="Clerc-Blankenburg K.P."/>
            <person name="Chen R."/>
            <person name="Chen Z."/>
            <person name="Davis C."/>
            <person name="Delgado O."/>
            <person name="Dinh H.H."/>
            <person name="Dong W."/>
            <person name="Draper H."/>
            <person name="Ernst S."/>
            <person name="Fu G."/>
            <person name="Gonzalez-Garay M.L."/>
            <person name="Garcia D.K."/>
            <person name="Gillett W."/>
            <person name="Gu J."/>
            <person name="Hao B."/>
            <person name="Haugen E."/>
            <person name="Havlak P."/>
            <person name="He X."/>
            <person name="Hennig S."/>
            <person name="Hu S."/>
            <person name="Huang W."/>
            <person name="Jackson L.R."/>
            <person name="Jacob L.S."/>
            <person name="Kelly S.H."/>
            <person name="Kube M."/>
            <person name="Levy R."/>
            <person name="Li Z."/>
            <person name="Liu B."/>
            <person name="Liu J."/>
            <person name="Liu W."/>
            <person name="Lu J."/>
            <person name="Maheshwari M."/>
            <person name="Nguyen B.-V."/>
            <person name="Okwuonu G.O."/>
            <person name="Palmeiri A."/>
            <person name="Pasternak S."/>
            <person name="Perez L.M."/>
            <person name="Phelps K.A."/>
            <person name="Plopper F.J."/>
            <person name="Qiang B."/>
            <person name="Raymond C."/>
            <person name="Rodriguez R."/>
            <person name="Saenphimmachak C."/>
            <person name="Santibanez J."/>
            <person name="Shen H."/>
            <person name="Shen Y."/>
            <person name="Subramanian S."/>
            <person name="Tabor P.E."/>
            <person name="Verduzco D."/>
            <person name="Waldron L."/>
            <person name="Wang J."/>
            <person name="Wang J."/>
            <person name="Wang Q."/>
            <person name="Williams G.A."/>
            <person name="Wong G.K.-S."/>
            <person name="Yao Z."/>
            <person name="Zhang J."/>
            <person name="Zhang X."/>
            <person name="Zhao G."/>
            <person name="Zhou J."/>
            <person name="Zhou Y."/>
            <person name="Nelson D."/>
            <person name="Lehrach H."/>
            <person name="Reinhardt R."/>
            <person name="Naylor S.L."/>
            <person name="Yang H."/>
            <person name="Olson M."/>
            <person name="Weinstock G."/>
            <person name="Gibbs R.A."/>
        </authorList>
    </citation>
    <scope>NUCLEOTIDE SEQUENCE [LARGE SCALE GENOMIC DNA]</scope>
</reference>
<reference key="5">
    <citation type="journal article" date="1993" name="Mol. Cell. Biol.">
        <title>A novel recognition motif for phosphatidylinositol 3-kinase binding mediates its association with the hepatocyte growth factor/scatter factor receptor.</title>
        <authorList>
            <person name="Ponzetto C."/>
            <person name="Bardelli A."/>
            <person name="Maina F."/>
            <person name="Longati P."/>
            <person name="Panayotou G."/>
            <person name="Dhand R."/>
            <person name="Waterfield M.D."/>
            <person name="Comoglio P.M."/>
        </authorList>
    </citation>
    <scope>INTERACTION WITH PIK3R1</scope>
</reference>
<reference key="6">
    <citation type="journal article" date="1994" name="EMBO J.">
        <title>RON is a heterodimeric tyrosine kinase receptor activated by the HGF homologue MSP.</title>
        <authorList>
            <person name="Gaudino G."/>
            <person name="Follenzi A."/>
            <person name="Naldini L."/>
            <person name="Collesi C."/>
            <person name="Santoro M."/>
            <person name="Gallo K.A."/>
            <person name="Godowski P.J."/>
            <person name="Comoglio P.M."/>
        </authorList>
    </citation>
    <scope>TISSUE SPECIFICITY</scope>
</reference>
<reference key="7">
    <citation type="journal article" date="1994" name="Science">
        <title>Identification of the ron gene product as the receptor for the human macrophage stimulating protein.</title>
        <authorList>
            <person name="Wang M.-H."/>
            <person name="Ronsin C."/>
            <person name="Gesnel M.-C."/>
            <person name="Coupey L."/>
            <person name="Skeel A."/>
            <person name="Leonard E.J."/>
            <person name="Breatnach R."/>
        </authorList>
    </citation>
    <scope>FUNCTION</scope>
</reference>
<reference key="8">
    <citation type="journal article" date="1998" name="J. Invest. Dermatol.">
        <title>Proteolytic cleavage and activation of pro-macrophage-stimulating protein and upregulation of its receptor in tissue injury.</title>
        <authorList>
            <person name="Nanney L.B."/>
            <person name="Skeel A."/>
            <person name="Luan J."/>
            <person name="Polis S."/>
            <person name="Richmond A."/>
            <person name="Wang M.H."/>
            <person name="Leonard E.J."/>
        </authorList>
    </citation>
    <scope>FUNCTION IN WOUND HEALING RESPONSE</scope>
</reference>
<reference key="9">
    <citation type="journal article" date="1999" name="Exp. Cell Res.">
        <title>Macrophage stimulating protein-induced epithelial cell adhesion is mediated by a PI3-K-dependent, but FAK-independent mechanism.</title>
        <authorList>
            <person name="Danilkovitch A."/>
            <person name="Skeel A."/>
            <person name="Leonard E.J."/>
        </authorList>
    </citation>
    <scope>INTERACTION WITH ITGB1</scope>
</reference>
<reference key="10">
    <citation type="journal article" date="1999" name="J. Biol. Chem.">
        <title>Interaction of macrophage-stimulating protein with its receptor. Residues critical for beta chain binding and evidence for independent alpha chain binding.</title>
        <authorList>
            <person name="Danilkovitch A."/>
            <person name="Miller M."/>
            <person name="Leonard E.J."/>
        </authorList>
    </citation>
    <scope>INTERACTION WITH MST1</scope>
</reference>
<reference key="11">
    <citation type="journal article" date="2002" name="Scand. J. Immunol.">
        <title>Macrophage-stimulating protein and RON receptor tyrosine kinase: potential regulators of macrophage inflammatory activities.</title>
        <authorList>
            <person name="Wang M.H."/>
            <person name="Zhou Y.Q."/>
            <person name="Chen Y.Q."/>
        </authorList>
    </citation>
    <scope>REVIEW ON FUNCTION</scope>
</reference>
<reference key="12">
    <citation type="journal article" date="2003" name="Oncogene">
        <title>c-Cbl is a critical modulator of the Ron tyrosine kinase receptor.</title>
        <authorList>
            <person name="Penengo L."/>
            <person name="Rubin C."/>
            <person name="Yarden Y."/>
            <person name="Gaudino G."/>
        </authorList>
    </citation>
    <scope>UBIQUITINATION</scope>
</reference>
<reference key="13">
    <citation type="journal article" date="2003" name="Proc. Natl. Acad. Sci. U.S.A.">
        <title>Hyaluronidase 2 negatively regulates RON receptor tyrosine kinase and mediates transformation of epithelial cells by jaagsiekte sheep retrovirus.</title>
        <authorList>
            <person name="Danilkovitch-Miagkova A."/>
            <person name="Duh F.-M."/>
            <person name="Kuzmin I."/>
            <person name="Angeloni D."/>
            <person name="Liu S.-L."/>
            <person name="Miller A.D."/>
            <person name="Lerman M.I."/>
        </authorList>
    </citation>
    <scope>INTERACTION WITH HYAL2</scope>
</reference>
<reference key="14">
    <citation type="journal article" date="2004" name="Oncogene">
        <title>Interplay between scatter factor receptors and B plexins controls invasive growth.</title>
        <authorList>
            <person name="Conrotto P."/>
            <person name="Corso S."/>
            <person name="Gamberini S."/>
            <person name="Comoglio P.M."/>
            <person name="Giordano S."/>
        </authorList>
    </citation>
    <scope>INTERACTION WITH PLXNB1</scope>
</reference>
<reference key="15">
    <citation type="journal article" date="2005" name="J. Biol. Chem.">
        <title>The C terminus of RON tyrosine kinase plays an autoinhibitory role.</title>
        <authorList>
            <person name="Yokoyama N."/>
            <person name="Ischenko I."/>
            <person name="Hayman M.J."/>
            <person name="Miller W.T."/>
        </authorList>
    </citation>
    <scope>PHOSPHORYLATION AT TYR-1238; TYR-1239; TYR-1353 AND TYR-1360</scope>
    <scope>ACTIVITY REGULATION</scope>
</reference>
<reference key="16">
    <citation type="journal article" date="2009" name="Oncogene">
        <title>The RON receptor tyrosine kinase promotes MSP-independent cell spreading and survival in breast epithelial cells.</title>
        <authorList>
            <person name="Feres K.J."/>
            <person name="Ischenko I."/>
            <person name="Hayman M.J."/>
        </authorList>
    </citation>
    <scope>FUNCTION</scope>
</reference>
<reference key="17">
    <citation type="journal article" date="2011" name="BMC Syst. Biol.">
        <title>Initial characterization of the human central proteome.</title>
        <authorList>
            <person name="Burkard T.R."/>
            <person name="Planyavsky M."/>
            <person name="Kaupe I."/>
            <person name="Breitwieser F.P."/>
            <person name="Buerckstuemmer T."/>
            <person name="Bennett K.L."/>
            <person name="Superti-Furga G."/>
            <person name="Colinge J."/>
        </authorList>
    </citation>
    <scope>IDENTIFICATION BY MASS SPECTROMETRY [LARGE SCALE ANALYSIS]</scope>
</reference>
<reference key="18">
    <citation type="journal article" date="2011" name="J. Biol. Chem.">
        <title>Distinct involvement of the Gab1 and Grb2 adaptor proteins in signal transduction by the related receptor tyrosine kinases RON and MET.</title>
        <authorList>
            <person name="Chaudhuri A."/>
            <person name="Xie M.H."/>
            <person name="Yang B."/>
            <person name="Mahapatra K."/>
            <person name="Liu J."/>
            <person name="Marsters S."/>
            <person name="Bodepudi S."/>
            <person name="Ashkenazi A."/>
        </authorList>
    </citation>
    <scope>INTERACTION WITH GAB1 AND GRB2</scope>
</reference>
<reference key="19">
    <citation type="journal article" date="2023" name="Proc. Natl. Acad. Sci. U.S.A.">
        <title>The SHDRA syndrome-associated geDne TMEM260 encodes a protein-specific O-mannosyltransferase.</title>
        <authorList>
            <person name="Larsen I.S.B."/>
            <person name="Povolo L."/>
            <person name="Zhou L."/>
            <person name="Tian W."/>
            <person name="Mygind K.J."/>
            <person name="Hintze J."/>
            <person name="Jiang C."/>
            <person name="Hartill V."/>
            <person name="Prescott K."/>
            <person name="Johnson C.A."/>
            <person name="Mullegama S.V."/>
            <person name="McConkie-Rosell A."/>
            <person name="McDonald M."/>
            <person name="Hansen L."/>
            <person name="Vakhrushev S.Y."/>
            <person name="Schjoldager K.T."/>
            <person name="Clausen H."/>
            <person name="Worzfeld T."/>
            <person name="Joshi H.J."/>
            <person name="Halim A."/>
        </authorList>
    </citation>
    <scope>GLYCOSYLATION BY TMEM260</scope>
</reference>
<reference key="20">
    <citation type="journal article" date="2010" name="Biochemistry">
        <title>The crystal structure of a constitutively active mutant RON kinase suggests an intramolecular autophosphorylation hypothesis.</title>
        <authorList>
            <person name="Wang J."/>
            <person name="Steinbacher S."/>
            <person name="Augustin M."/>
            <person name="Schreiner P."/>
            <person name="Epstein D."/>
            <person name="Mulvihill M.J."/>
            <person name="Crew A.P."/>
        </authorList>
    </citation>
    <scope>X-RAY CRYSTALLOGRAPHY (2.24 ANGSTROMS) OF 1060-1357 IN COMPLEX WITH AMP-PNP AND MAGNESIUM</scope>
    <scope>ACTIVE SITE</scope>
    <scope>PHOSPHORYLATION AT TYR-1238</scope>
</reference>
<reference key="21">
    <citation type="journal article" date="2012" name="PLoS ONE">
        <title>Crystal structure of the Sema-PSI extracellular domain of human RON receptor tyrosine kinase.</title>
        <authorList>
            <person name="Chao K.L."/>
            <person name="Tsai I.W."/>
            <person name="Chen C."/>
            <person name="Herzberg O."/>
        </authorList>
    </citation>
    <scope>X-RAY CRYSTALLOGRAPHY (1.85 ANGSTROMS) OF 42-568</scope>
    <scope>GLYCOSYLATION AT ASN-488</scope>
    <scope>DISULFIDE BONDS</scope>
</reference>
<reference key="22">
    <citation type="journal article" date="2007" name="Nature">
        <title>Patterns of somatic mutation in human cancer genomes.</title>
        <authorList>
            <person name="Greenman C."/>
            <person name="Stephens P."/>
            <person name="Smith R."/>
            <person name="Dalgliesh G.L."/>
            <person name="Hunter C."/>
            <person name="Bignell G."/>
            <person name="Davies H."/>
            <person name="Teague J."/>
            <person name="Butler A."/>
            <person name="Stevens C."/>
            <person name="Edkins S."/>
            <person name="O'Meara S."/>
            <person name="Vastrik I."/>
            <person name="Schmidt E.E."/>
            <person name="Avis T."/>
            <person name="Barthorpe S."/>
            <person name="Bhamra G."/>
            <person name="Buck G."/>
            <person name="Choudhury B."/>
            <person name="Clements J."/>
            <person name="Cole J."/>
            <person name="Dicks E."/>
            <person name="Forbes S."/>
            <person name="Gray K."/>
            <person name="Halliday K."/>
            <person name="Harrison R."/>
            <person name="Hills K."/>
            <person name="Hinton J."/>
            <person name="Jenkinson A."/>
            <person name="Jones D."/>
            <person name="Menzies A."/>
            <person name="Mironenko T."/>
            <person name="Perry J."/>
            <person name="Raine K."/>
            <person name="Richardson D."/>
            <person name="Shepherd R."/>
            <person name="Small A."/>
            <person name="Tofts C."/>
            <person name="Varian J."/>
            <person name="Webb T."/>
            <person name="West S."/>
            <person name="Widaa S."/>
            <person name="Yates A."/>
            <person name="Cahill D.P."/>
            <person name="Louis D.N."/>
            <person name="Goldstraw P."/>
            <person name="Nicholson A.G."/>
            <person name="Brasseur F."/>
            <person name="Looijenga L."/>
            <person name="Weber B.L."/>
            <person name="Chiew Y.-E."/>
            <person name="DeFazio A."/>
            <person name="Greaves M.F."/>
            <person name="Green A.R."/>
            <person name="Campbell P."/>
            <person name="Birney E."/>
            <person name="Easton D.F."/>
            <person name="Chenevix-Trench G."/>
            <person name="Tan M.-H."/>
            <person name="Khoo S.K."/>
            <person name="Teh B.T."/>
            <person name="Yuen S.T."/>
            <person name="Leung S.Y."/>
            <person name="Wooster R."/>
            <person name="Futreal P.A."/>
            <person name="Stratton M.R."/>
        </authorList>
    </citation>
    <scope>VARIANTS [LARGE SCALE ANALYSIS] SER-75; THR-95; CYS-185; GLN-322; ASP-356; LEU-434; ASP-465; CYS-504; ARG-523; PRO-613; MET-900; GLY-1304; GLY-1335 AND CYS-1360</scope>
</reference>
<reference key="23">
    <citation type="journal article" date="2016" name="Proc. Natl. Acad. Sci. U.S.A.">
        <title>Whole-exome sequencing identifies MST1R as a genetic susceptibility gene in nasopharyngeal carcinoma.</title>
        <authorList>
            <person name="Dai W."/>
            <person name="Zheng H."/>
            <person name="Cheung A.K."/>
            <person name="Tang C.S."/>
            <person name="Ko J.M."/>
            <person name="Wong B.W."/>
            <person name="Leong M.M."/>
            <person name="Sham P.C."/>
            <person name="Cheung F."/>
            <person name="Kwong D.L."/>
            <person name="Ngan R.K."/>
            <person name="Ng W.T."/>
            <person name="Yau C.C."/>
            <person name="Pan J."/>
            <person name="Peng X."/>
            <person name="Tung S."/>
            <person name="Zhang Z."/>
            <person name="Ji M."/>
            <person name="Chiang A.K."/>
            <person name="Lee A.W."/>
            <person name="Lee V.H."/>
            <person name="Lam K.O."/>
            <person name="Au K.H."/>
            <person name="Cheng H.C."/>
            <person name="Yiu H.H."/>
            <person name="Lung M.L."/>
        </authorList>
    </citation>
    <scope>VARIANTS NPCA3 HIS-306; THR-327; GLY-670 AND THR-973</scope>
    <scope>INVOLVEMENT IN NPCA3</scope>
</reference>
<organism>
    <name type="scientific">Homo sapiens</name>
    <name type="common">Human</name>
    <dbReference type="NCBI Taxonomy" id="9606"/>
    <lineage>
        <taxon>Eukaryota</taxon>
        <taxon>Metazoa</taxon>
        <taxon>Chordata</taxon>
        <taxon>Craniata</taxon>
        <taxon>Vertebrata</taxon>
        <taxon>Euteleostomi</taxon>
        <taxon>Mammalia</taxon>
        <taxon>Eutheria</taxon>
        <taxon>Euarchontoglires</taxon>
        <taxon>Primates</taxon>
        <taxon>Haplorrhini</taxon>
        <taxon>Catarrhini</taxon>
        <taxon>Hominidae</taxon>
        <taxon>Homo</taxon>
    </lineage>
</organism>
<proteinExistence type="evidence at protein level"/>
<keyword id="KW-0002">3D-structure</keyword>
<keyword id="KW-0025">Alternative splicing</keyword>
<keyword id="KW-0067">ATP-binding</keyword>
<keyword id="KW-0165">Cleavage on pair of basic residues</keyword>
<keyword id="KW-0225">Disease variant</keyword>
<keyword id="KW-1015">Disulfide bond</keyword>
<keyword id="KW-0325">Glycoprotein</keyword>
<keyword id="KW-0391">Immunity</keyword>
<keyword id="KW-0399">Innate immunity</keyword>
<keyword id="KW-0418">Kinase</keyword>
<keyword id="KW-0472">Membrane</keyword>
<keyword id="KW-0547">Nucleotide-binding</keyword>
<keyword id="KW-0597">Phosphoprotein</keyword>
<keyword id="KW-1267">Proteomics identification</keyword>
<keyword id="KW-0675">Receptor</keyword>
<keyword id="KW-1185">Reference proteome</keyword>
<keyword id="KW-0677">Repeat</keyword>
<keyword id="KW-0732">Signal</keyword>
<keyword id="KW-0808">Transferase</keyword>
<keyword id="KW-0812">Transmembrane</keyword>
<keyword id="KW-1133">Transmembrane helix</keyword>
<keyword id="KW-0829">Tyrosine-protein kinase</keyword>
<keyword id="KW-0832">Ubl conjugation</keyword>
<comment type="function">
    <text evidence="13 20 23">Receptor tyrosine kinase that transduces signals from the extracellular matrix into the cytoplasm by binding to MST1 ligand. Regulates many physiological processes including cell survival, migration and differentiation. Ligand binding at the cell surface induces autophosphorylation of RON on its intracellular domain that provides docking sites for downstream signaling molecules. Following activation by ligand, interacts with the PI3-kinase subunit PIK3R1, PLCG1 or the adapter GAB1. Recruitment of these downstream effectors by RON leads to the activation of several signaling cascades including the RAS-ERK, PI3 kinase-AKT, or PLCgamma-PKC. RON signaling activates the wound healing response by promoting epithelial cell migration, proliferation as well as survival at the wound site. Also plays a role in the innate immune response by regulating the migration and phagocytic activity of macrophages. Alternatively, RON can also promote signals such as cell migration and proliferation in response to growth factors other than MST1 ligand.</text>
</comment>
<comment type="catalytic activity">
    <reaction evidence="4">
        <text>L-tyrosyl-[protein] + ATP = O-phospho-L-tyrosyl-[protein] + ADP + H(+)</text>
        <dbReference type="Rhea" id="RHEA:10596"/>
        <dbReference type="Rhea" id="RHEA-COMP:10136"/>
        <dbReference type="Rhea" id="RHEA-COMP:20101"/>
        <dbReference type="ChEBI" id="CHEBI:15378"/>
        <dbReference type="ChEBI" id="CHEBI:30616"/>
        <dbReference type="ChEBI" id="CHEBI:46858"/>
        <dbReference type="ChEBI" id="CHEBI:61978"/>
        <dbReference type="ChEBI" id="CHEBI:456216"/>
        <dbReference type="EC" id="2.7.10.1"/>
    </reaction>
</comment>
<comment type="activity regulation">
    <text evidence="11">In its inactive state, the C-terminal tail interacts with the catalytic domain and inhibits the kinase activity. Upon ligand binding, the C-terminal tail is displaced and becomes phosphorylated, thus increasing the kinase activity.</text>
</comment>
<comment type="subunit">
    <text evidence="6 7 8 10 14 15 19">Heterodimer of an alpha chain and a beta chain which are disulfide linked. Binds PLXNB1. Associates with and is negatively regulated by HYAL2. Interacts when phosphorylated with downstream effectors including PIK3R1, PCLG1, GRB2 and GAB1. Interacts with integrin beta1/ITGB1 in a ligand-independent fashion.</text>
</comment>
<comment type="interaction">
    <interactant intactId="EBI-2637518">
        <id>Q04912</id>
    </interactant>
    <interactant intactId="EBI-6929133">
        <id>P26927</id>
        <label>MST1</label>
    </interactant>
    <organismsDiffer>false</organismsDiffer>
    <experiments>5</experiments>
</comment>
<comment type="interaction">
    <interactant intactId="EBI-2637518">
        <id>Q04912</id>
    </interactant>
    <interactant intactId="EBI-1111488">
        <id>O43157</id>
        <label>PLXNB1</label>
    </interactant>
    <organismsDiffer>false</organismsDiffer>
    <experiments>3</experiments>
</comment>
<comment type="interaction">
    <interactant intactId="EBI-2637518">
        <id>Q04912</id>
    </interactant>
    <interactant intactId="EBI-722004">
        <id>O15031</id>
        <label>PLXNB2</label>
    </interactant>
    <organismsDiffer>false</organismsDiffer>
    <experiments>2</experiments>
</comment>
<comment type="interaction">
    <interactant intactId="EBI-2637518">
        <id>Q04912</id>
    </interactant>
    <interactant intactId="EBI-311073">
        <id>Q9ULL4</id>
        <label>PLXNB3</label>
    </interactant>
    <organismsDiffer>false</organismsDiffer>
    <experiments>2</experiments>
</comment>
<comment type="subcellular location">
    <subcellularLocation>
        <location>Membrane</location>
        <topology>Single-pass type I membrane protein</topology>
    </subcellularLocation>
</comment>
<comment type="alternative products">
    <event type="alternative splicing"/>
    <isoform>
        <id>Q04912-1</id>
        <name>RON</name>
        <sequence type="displayed"/>
    </isoform>
    <isoform>
        <id>Q04912-2</id>
        <name>Delta-RON</name>
        <name>sf-RON</name>
        <sequence type="described" ref="VSP_005007"/>
    </isoform>
    <isoform>
        <id>Q04912-3</id>
        <name>RON-1</name>
        <sequence type="described" ref="VSP_038920 VSP_038921"/>
    </isoform>
    <isoform>
        <id>Q04912-4</id>
        <name>RON-2</name>
        <sequence type="described" ref="VSP_038919 VSP_038922 VSP_038923"/>
    </isoform>
    <isoform>
        <id>Q04912-5</id>
        <name>RON-3</name>
        <sequence type="described" ref="VSP_038924 VSP_038925"/>
    </isoform>
    <isoform>
        <id>Q04912-6</id>
        <name>RON-4</name>
        <sequence type="described" ref="VSP_038922 VSP_038923"/>
    </isoform>
    <isoform>
        <id>Q04912-7</id>
        <name>RON-5</name>
        <sequence type="described" ref="VSP_038919"/>
    </isoform>
</comment>
<comment type="tissue specificity">
    <text evidence="21">Expressed in colon, skin, lung and bone marrow.</text>
</comment>
<comment type="PTM">
    <text>Proteolytic processing yields the two subunits.</text>
</comment>
<comment type="PTM">
    <text evidence="11 14">Autophosphorylated in response to ligand binding on Tyr-1238 and Tyr-1239 in the kinase domain leading to further phosphorylation of Tyr-1353 and Tyr-1360 in the C-terminal multifunctional docking site.</text>
</comment>
<comment type="PTM">
    <text evidence="9">Ubiquitinated. Ubiquitination by CBL regulates the receptor stability and activity through proteasomal degradation.</text>
</comment>
<comment type="PTM">
    <text evidence="18">O-mannosylation of IPT/TIG domains on Thr or Ser residues by TMEM260 is required for protein maturation (PubMed:37186866). O-mannosylated residues are composed of single mannose glycans that are not elongated or modified (PubMed:37186866).</text>
</comment>
<comment type="disease" evidence="17">
    <disease id="DI-04806">
        <name>Nasopharyngeal carcinoma, 3</name>
        <acronym>NPCA3</acronym>
        <description>A form of nasopharyngeal carcinoma, a malignant neoplasm that originates in the nasopharyngeal epithelium and includes 4 subtypes: keratinizing squamous cell, non-keratinizing, basaloid squamous cell, and papillary adenocarcinoma.</description>
        <dbReference type="MIM" id="617075"/>
    </disease>
    <text>Disease susceptibility is associated with variants affecting the gene represented in this entry.</text>
</comment>
<comment type="miscellaneous">
    <molecule>Isoform Delta-RON</molecule>
    <text evidence="25">Lacks part of the extracellular domain, oligomerizes and is constitutively activated. Expressed at higher level in cancer cells.</text>
</comment>
<comment type="similarity">
    <text evidence="2">Belongs to the protein kinase superfamily. Tyr protein kinase family.</text>
</comment>
<comment type="online information" name="Atlas of Genetics and Cytogenetics in Oncology and Haematology">
    <link uri="https://atlasgeneticsoncology.org/gene/287/RON"/>
</comment>